<protein>
    <recommendedName>
        <fullName evidence="1">3-isopropylmalate dehydrogenase</fullName>
        <ecNumber evidence="1">1.1.1.85</ecNumber>
    </recommendedName>
    <alternativeName>
        <fullName evidence="1">3-IPM-DH</fullName>
    </alternativeName>
    <alternativeName>
        <fullName evidence="1">Beta-IPM dehydrogenase</fullName>
        <shortName evidence="1">IMDH</shortName>
    </alternativeName>
</protein>
<keyword id="KW-0028">Amino-acid biosynthesis</keyword>
<keyword id="KW-0100">Branched-chain amino acid biosynthesis</keyword>
<keyword id="KW-0963">Cytoplasm</keyword>
<keyword id="KW-0432">Leucine biosynthesis</keyword>
<keyword id="KW-0460">Magnesium</keyword>
<keyword id="KW-0464">Manganese</keyword>
<keyword id="KW-0479">Metal-binding</keyword>
<keyword id="KW-0520">NAD</keyword>
<keyword id="KW-0560">Oxidoreductase</keyword>
<keyword id="KW-1185">Reference proteome</keyword>
<dbReference type="EC" id="1.1.1.85" evidence="1"/>
<dbReference type="EMBL" id="AE008692">
    <property type="protein sequence ID" value="AAV89301.1"/>
    <property type="molecule type" value="Genomic_DNA"/>
</dbReference>
<dbReference type="RefSeq" id="WP_011240570.1">
    <property type="nucleotide sequence ID" value="NZ_CP035711.1"/>
</dbReference>
<dbReference type="SMR" id="Q5NPQ9"/>
<dbReference type="STRING" id="264203.ZMO0677"/>
<dbReference type="GeneID" id="79904147"/>
<dbReference type="KEGG" id="zmo:ZMO0677"/>
<dbReference type="eggNOG" id="COG0473">
    <property type="taxonomic scope" value="Bacteria"/>
</dbReference>
<dbReference type="HOGENOM" id="CLU_031953_0_3_5"/>
<dbReference type="UniPathway" id="UPA00048">
    <property type="reaction ID" value="UER00072"/>
</dbReference>
<dbReference type="Proteomes" id="UP000001173">
    <property type="component" value="Chromosome"/>
</dbReference>
<dbReference type="GO" id="GO:0005829">
    <property type="term" value="C:cytosol"/>
    <property type="evidence" value="ECO:0007669"/>
    <property type="project" value="TreeGrafter"/>
</dbReference>
<dbReference type="GO" id="GO:0003862">
    <property type="term" value="F:3-isopropylmalate dehydrogenase activity"/>
    <property type="evidence" value="ECO:0007669"/>
    <property type="project" value="UniProtKB-UniRule"/>
</dbReference>
<dbReference type="GO" id="GO:0000287">
    <property type="term" value="F:magnesium ion binding"/>
    <property type="evidence" value="ECO:0007669"/>
    <property type="project" value="InterPro"/>
</dbReference>
<dbReference type="GO" id="GO:0051287">
    <property type="term" value="F:NAD binding"/>
    <property type="evidence" value="ECO:0007669"/>
    <property type="project" value="InterPro"/>
</dbReference>
<dbReference type="GO" id="GO:0009098">
    <property type="term" value="P:L-leucine biosynthetic process"/>
    <property type="evidence" value="ECO:0007669"/>
    <property type="project" value="UniProtKB-UniRule"/>
</dbReference>
<dbReference type="FunFam" id="3.40.718.10:FF:000028">
    <property type="entry name" value="3-isopropylmalate dehydrogenase"/>
    <property type="match status" value="1"/>
</dbReference>
<dbReference type="Gene3D" id="3.40.718.10">
    <property type="entry name" value="Isopropylmalate Dehydrogenase"/>
    <property type="match status" value="1"/>
</dbReference>
<dbReference type="HAMAP" id="MF_01033">
    <property type="entry name" value="LeuB_type1"/>
    <property type="match status" value="1"/>
</dbReference>
<dbReference type="InterPro" id="IPR019818">
    <property type="entry name" value="IsoCit/isopropylmalate_DH_CS"/>
</dbReference>
<dbReference type="InterPro" id="IPR024084">
    <property type="entry name" value="IsoPropMal-DH-like_dom"/>
</dbReference>
<dbReference type="InterPro" id="IPR004429">
    <property type="entry name" value="Isopropylmalate_DH"/>
</dbReference>
<dbReference type="NCBIfam" id="TIGR00169">
    <property type="entry name" value="leuB"/>
    <property type="match status" value="1"/>
</dbReference>
<dbReference type="PANTHER" id="PTHR42979">
    <property type="entry name" value="3-ISOPROPYLMALATE DEHYDROGENASE"/>
    <property type="match status" value="1"/>
</dbReference>
<dbReference type="PANTHER" id="PTHR42979:SF1">
    <property type="entry name" value="3-ISOPROPYLMALATE DEHYDROGENASE"/>
    <property type="match status" value="1"/>
</dbReference>
<dbReference type="Pfam" id="PF00180">
    <property type="entry name" value="Iso_dh"/>
    <property type="match status" value="1"/>
</dbReference>
<dbReference type="SMART" id="SM01329">
    <property type="entry name" value="Iso_dh"/>
    <property type="match status" value="1"/>
</dbReference>
<dbReference type="SUPFAM" id="SSF53659">
    <property type="entry name" value="Isocitrate/Isopropylmalate dehydrogenase-like"/>
    <property type="match status" value="1"/>
</dbReference>
<dbReference type="PROSITE" id="PS00470">
    <property type="entry name" value="IDH_IMDH"/>
    <property type="match status" value="1"/>
</dbReference>
<reference key="1">
    <citation type="journal article" date="2005" name="Nat. Biotechnol.">
        <title>The genome sequence of the ethanologenic bacterium Zymomonas mobilis ZM4.</title>
        <authorList>
            <person name="Seo J.-S."/>
            <person name="Chong H."/>
            <person name="Park H.S."/>
            <person name="Yoon K.-O."/>
            <person name="Jung C."/>
            <person name="Kim J.J."/>
            <person name="Hong J.H."/>
            <person name="Kim H."/>
            <person name="Kim J.-H."/>
            <person name="Kil J.-I."/>
            <person name="Park C.J."/>
            <person name="Oh H.-M."/>
            <person name="Lee J.-S."/>
            <person name="Jin S.-J."/>
            <person name="Um H.-W."/>
            <person name="Lee H.-J."/>
            <person name="Oh S.-J."/>
            <person name="Kim J.Y."/>
            <person name="Kang H.L."/>
            <person name="Lee S.Y."/>
            <person name="Lee K.J."/>
            <person name="Kang H.S."/>
        </authorList>
    </citation>
    <scope>NUCLEOTIDE SEQUENCE [LARGE SCALE GENOMIC DNA]</scope>
    <source>
        <strain>ATCC 31821 / ZM4 / CP4</strain>
    </source>
</reference>
<accession>Q5NPQ9</accession>
<proteinExistence type="inferred from homology"/>
<name>LEU3_ZYMMO</name>
<gene>
    <name evidence="1" type="primary">leuB</name>
    <name type="ordered locus">ZMO0677</name>
</gene>
<organism>
    <name type="scientific">Zymomonas mobilis subsp. mobilis (strain ATCC 31821 / ZM4 / CP4)</name>
    <dbReference type="NCBI Taxonomy" id="264203"/>
    <lineage>
        <taxon>Bacteria</taxon>
        <taxon>Pseudomonadati</taxon>
        <taxon>Pseudomonadota</taxon>
        <taxon>Alphaproteobacteria</taxon>
        <taxon>Sphingomonadales</taxon>
        <taxon>Zymomonadaceae</taxon>
        <taxon>Zymomonas</taxon>
    </lineage>
</organism>
<sequence>MRIALLAGDGIGPEITAEAVKILKAVVGQEIEFDEALIGGAAWKVTGSPLPEETLKLCKNSDAILFGSVGDPECDHLERALRPEQAILGLRKELDLFANLRPARLFPELQAESPLKENIVTGTDLMIVRELTGDVYFGTPRGQRKDDQNRREGFDTMRYNEDEVKRIARIGFETARSRSGNLCSIDKSNVLETSQLWRTVVLEIAQEYPDVELSHMYVDNAAMQLVRAPDQFDVIVTGNLFGDILSDLASACVGSIGLLPSASLNSEGKGLYEPIHGSAPDIAGLGKANPLATILSGAMMLRYSLKREADADRIEKAVSTALEKGARTADLGGKMTTSEMGNAVLAALN</sequence>
<feature type="chain" id="PRO_0000083793" description="3-isopropylmalate dehydrogenase">
    <location>
        <begin position="1"/>
        <end position="349"/>
    </location>
</feature>
<feature type="binding site" evidence="1">
    <location>
        <position position="91"/>
    </location>
    <ligand>
        <name>substrate</name>
    </ligand>
</feature>
<feature type="binding site" evidence="1">
    <location>
        <position position="101"/>
    </location>
    <ligand>
        <name>substrate</name>
    </ligand>
</feature>
<feature type="binding site" evidence="1">
    <location>
        <position position="129"/>
    </location>
    <ligand>
        <name>substrate</name>
    </ligand>
</feature>
<feature type="binding site" evidence="1">
    <location>
        <position position="219"/>
    </location>
    <ligand>
        <name>Mg(2+)</name>
        <dbReference type="ChEBI" id="CHEBI:18420"/>
    </ligand>
</feature>
<feature type="binding site" evidence="1">
    <location>
        <position position="219"/>
    </location>
    <ligand>
        <name>substrate</name>
    </ligand>
</feature>
<feature type="binding site" evidence="1">
    <location>
        <position position="243"/>
    </location>
    <ligand>
        <name>Mg(2+)</name>
        <dbReference type="ChEBI" id="CHEBI:18420"/>
    </ligand>
</feature>
<feature type="binding site" evidence="1">
    <location>
        <position position="247"/>
    </location>
    <ligand>
        <name>Mg(2+)</name>
        <dbReference type="ChEBI" id="CHEBI:18420"/>
    </ligand>
</feature>
<feature type="binding site" evidence="1">
    <location>
        <begin position="277"/>
        <end position="289"/>
    </location>
    <ligand>
        <name>NAD(+)</name>
        <dbReference type="ChEBI" id="CHEBI:57540"/>
    </ligand>
</feature>
<feature type="site" description="Important for catalysis" evidence="1">
    <location>
        <position position="136"/>
    </location>
</feature>
<feature type="site" description="Important for catalysis" evidence="1">
    <location>
        <position position="187"/>
    </location>
</feature>
<comment type="function">
    <text evidence="1">Catalyzes the oxidation of 3-carboxy-2-hydroxy-4-methylpentanoate (3-isopropylmalate) to 3-carboxy-4-methyl-2-oxopentanoate. The product decarboxylates to 4-methyl-2 oxopentanoate.</text>
</comment>
<comment type="catalytic activity">
    <reaction evidence="1">
        <text>(2R,3S)-3-isopropylmalate + NAD(+) = 4-methyl-2-oxopentanoate + CO2 + NADH</text>
        <dbReference type="Rhea" id="RHEA:32271"/>
        <dbReference type="ChEBI" id="CHEBI:16526"/>
        <dbReference type="ChEBI" id="CHEBI:17865"/>
        <dbReference type="ChEBI" id="CHEBI:35121"/>
        <dbReference type="ChEBI" id="CHEBI:57540"/>
        <dbReference type="ChEBI" id="CHEBI:57945"/>
        <dbReference type="EC" id="1.1.1.85"/>
    </reaction>
</comment>
<comment type="cofactor">
    <cofactor evidence="1">
        <name>Mg(2+)</name>
        <dbReference type="ChEBI" id="CHEBI:18420"/>
    </cofactor>
    <cofactor evidence="1">
        <name>Mn(2+)</name>
        <dbReference type="ChEBI" id="CHEBI:29035"/>
    </cofactor>
    <text evidence="1">Binds 1 Mg(2+) or Mn(2+) ion per subunit.</text>
</comment>
<comment type="pathway">
    <text evidence="1">Amino-acid biosynthesis; L-leucine biosynthesis; L-leucine from 3-methyl-2-oxobutanoate: step 3/4.</text>
</comment>
<comment type="subunit">
    <text evidence="1">Homodimer.</text>
</comment>
<comment type="subcellular location">
    <subcellularLocation>
        <location evidence="1">Cytoplasm</location>
    </subcellularLocation>
</comment>
<comment type="similarity">
    <text evidence="1">Belongs to the isocitrate and isopropylmalate dehydrogenases family. LeuB type 1 subfamily.</text>
</comment>
<evidence type="ECO:0000255" key="1">
    <source>
        <dbReference type="HAMAP-Rule" id="MF_01033"/>
    </source>
</evidence>